<proteinExistence type="evidence at transcript level"/>
<reference key="1">
    <citation type="submission" date="2000-07" db="EMBL/GenBank/DDBJ databases">
        <title>Isolation of full-length cDNA clones from macaque brain cDNA libraries.</title>
        <authorList>
            <person name="Osada N."/>
            <person name="Hida M."/>
            <person name="Kusuda J."/>
            <person name="Tanuma R."/>
            <person name="Iseki K."/>
            <person name="Hirai M."/>
            <person name="Terao K."/>
            <person name="Suzuki Y."/>
            <person name="Sugano S."/>
            <person name="Hashimoto K."/>
        </authorList>
    </citation>
    <scope>NUCLEOTIDE SEQUENCE [LARGE SCALE MRNA]</scope>
    <source>
        <tissue>Brain cortex</tissue>
        <tissue>Medulla oblongata</tissue>
    </source>
</reference>
<organism>
    <name type="scientific">Macaca fascicularis</name>
    <name type="common">Crab-eating macaque</name>
    <name type="synonym">Cynomolgus monkey</name>
    <dbReference type="NCBI Taxonomy" id="9541"/>
    <lineage>
        <taxon>Eukaryota</taxon>
        <taxon>Metazoa</taxon>
        <taxon>Chordata</taxon>
        <taxon>Craniata</taxon>
        <taxon>Vertebrata</taxon>
        <taxon>Euteleostomi</taxon>
        <taxon>Mammalia</taxon>
        <taxon>Eutheria</taxon>
        <taxon>Euarchontoglires</taxon>
        <taxon>Primates</taxon>
        <taxon>Haplorrhini</taxon>
        <taxon>Catarrhini</taxon>
        <taxon>Cercopithecidae</taxon>
        <taxon>Cercopithecinae</taxon>
        <taxon>Macaca</taxon>
    </lineage>
</organism>
<sequence length="227" mass="25037">MASPSRQPPPGGSGLLHGSRARSYGSLVQSACSPVRERRLEHQLEPGDTLAGLALKYGVTMEQIKRANRLYTNDSIFLKKTLYIPILTEPRDLFNGLDSEEEKDGEEEVRPSNDEVWPHSTERKKQETGAGRANGEVFPTPGQETPTPIHDLSASDFLKKLDSQISLSKKAAAQKLKKGESGVPGEDAGLHLSSPRMQQRAVLGPVPLTRTSRTRTLRDQEDEIFKL</sequence>
<keyword id="KW-0597">Phosphoprotein</keyword>
<keyword id="KW-1185">Reference proteome</keyword>
<evidence type="ECO:0000250" key="1">
    <source>
        <dbReference type="UniProtKB" id="Q5HZA4"/>
    </source>
</evidence>
<evidence type="ECO:0000250" key="2">
    <source>
        <dbReference type="UniProtKB" id="Q96S90"/>
    </source>
</evidence>
<evidence type="ECO:0000250" key="3">
    <source>
        <dbReference type="UniProtKB" id="Q9D0E3"/>
    </source>
</evidence>
<evidence type="ECO:0000255" key="4">
    <source>
        <dbReference type="PROSITE-ProRule" id="PRU01118"/>
    </source>
</evidence>
<evidence type="ECO:0000256" key="5">
    <source>
        <dbReference type="SAM" id="MobiDB-lite"/>
    </source>
</evidence>
<name>LYSM1_MACFA</name>
<protein>
    <recommendedName>
        <fullName>LysM and putative peptidoglycan-binding domain-containing protein 1</fullName>
    </recommendedName>
</protein>
<feature type="chain" id="PRO_0000247997" description="LysM and putative peptidoglycan-binding domain-containing protein 1">
    <location>
        <begin position="1"/>
        <end position="227"/>
    </location>
</feature>
<feature type="domain" description="LysM" evidence="4">
    <location>
        <begin position="40"/>
        <end position="84"/>
    </location>
</feature>
<feature type="region of interest" description="Disordered" evidence="5">
    <location>
        <begin position="1"/>
        <end position="20"/>
    </location>
</feature>
<feature type="region of interest" description="Disordered" evidence="5">
    <location>
        <begin position="95"/>
        <end position="150"/>
    </location>
</feature>
<feature type="region of interest" description="Disordered" evidence="5">
    <location>
        <begin position="172"/>
        <end position="196"/>
    </location>
</feature>
<feature type="compositionally biased region" description="Pro residues" evidence="5">
    <location>
        <begin position="1"/>
        <end position="11"/>
    </location>
</feature>
<feature type="compositionally biased region" description="Acidic residues" evidence="5">
    <location>
        <begin position="98"/>
        <end position="107"/>
    </location>
</feature>
<feature type="compositionally biased region" description="Basic and acidic residues" evidence="5">
    <location>
        <begin position="108"/>
        <end position="127"/>
    </location>
</feature>
<feature type="modified residue" description="Phosphoserine" evidence="2">
    <location>
        <position position="23"/>
    </location>
</feature>
<feature type="modified residue" description="Phosphoserine" evidence="2">
    <location>
        <position position="33"/>
    </location>
</feature>
<feature type="modified residue" description="Phosphoserine" evidence="2">
    <location>
        <position position="99"/>
    </location>
</feature>
<feature type="modified residue" description="Phosphoserine" evidence="2">
    <location>
        <position position="166"/>
    </location>
</feature>
<feature type="modified residue" description="Phosphoserine" evidence="1">
    <location>
        <position position="181"/>
    </location>
</feature>
<feature type="modified residue" description="Phosphoserine" evidence="3">
    <location>
        <position position="194"/>
    </location>
</feature>
<feature type="modified residue" description="Phosphoserine" evidence="2">
    <location>
        <position position="212"/>
    </location>
</feature>
<gene>
    <name type="primary">LYSMD1</name>
    <name type="ORF">QccE-13440</name>
    <name type="ORF">QmoA-10566</name>
</gene>
<accession>Q9N012</accession>
<dbReference type="EMBL" id="AB046635">
    <property type="protein sequence ID" value="BAB03553.1"/>
    <property type="molecule type" value="mRNA"/>
</dbReference>
<dbReference type="EMBL" id="AB062973">
    <property type="protein sequence ID" value="BAB60744.1"/>
    <property type="molecule type" value="mRNA"/>
</dbReference>
<dbReference type="RefSeq" id="NP_001270390.1">
    <property type="nucleotide sequence ID" value="NM_001283461.1"/>
</dbReference>
<dbReference type="SMR" id="Q9N012"/>
<dbReference type="eggNOG" id="ENOG502RZER">
    <property type="taxonomic scope" value="Eukaryota"/>
</dbReference>
<dbReference type="Proteomes" id="UP000233100">
    <property type="component" value="Unplaced"/>
</dbReference>
<dbReference type="CDD" id="cd00118">
    <property type="entry name" value="LysM"/>
    <property type="match status" value="1"/>
</dbReference>
<dbReference type="FunFam" id="3.10.350.10:FF:000010">
    <property type="entry name" value="LysM and putative peptidoglycan-binding domain-containing protein 1"/>
    <property type="match status" value="1"/>
</dbReference>
<dbReference type="Gene3D" id="3.10.350.10">
    <property type="entry name" value="LysM domain"/>
    <property type="match status" value="1"/>
</dbReference>
<dbReference type="InterPro" id="IPR045030">
    <property type="entry name" value="LYSM1-4"/>
</dbReference>
<dbReference type="InterPro" id="IPR018392">
    <property type="entry name" value="LysM_dom"/>
</dbReference>
<dbReference type="InterPro" id="IPR036779">
    <property type="entry name" value="LysM_dom_sf"/>
</dbReference>
<dbReference type="PANTHER" id="PTHR20932:SF2">
    <property type="entry name" value="AND PUTATIVE PEPTIDOGLYCAN-BINDING DOMAIN-CONTAINING PROTEIN 1-RELATED"/>
    <property type="match status" value="1"/>
</dbReference>
<dbReference type="PANTHER" id="PTHR20932">
    <property type="entry name" value="LYSM AND PUTATIVE PEPTIDOGLYCAN-BINDING DOMAIN-CONTAINING PROTEIN"/>
    <property type="match status" value="1"/>
</dbReference>
<dbReference type="Pfam" id="PF01476">
    <property type="entry name" value="LysM"/>
    <property type="match status" value="1"/>
</dbReference>
<dbReference type="SMART" id="SM00257">
    <property type="entry name" value="LysM"/>
    <property type="match status" value="1"/>
</dbReference>
<dbReference type="SUPFAM" id="SSF54106">
    <property type="entry name" value="LysM domain"/>
    <property type="match status" value="1"/>
</dbReference>
<dbReference type="PROSITE" id="PS51782">
    <property type="entry name" value="LYSM"/>
    <property type="match status" value="1"/>
</dbReference>